<accession>Q4V0C6</accession>
<gene>
    <name evidence="1" type="primary">kduI</name>
    <name type="ordered locus">XC_0160</name>
</gene>
<comment type="function">
    <text evidence="1">Catalyzes the isomerization of 5-dehydro-4-deoxy-D-glucuronate to 3-deoxy-D-glycero-2,5-hexodiulosonate.</text>
</comment>
<comment type="catalytic activity">
    <reaction evidence="1">
        <text>5-dehydro-4-deoxy-D-glucuronate = 3-deoxy-D-glycero-2,5-hexodiulosonate</text>
        <dbReference type="Rhea" id="RHEA:23896"/>
        <dbReference type="ChEBI" id="CHEBI:17117"/>
        <dbReference type="ChEBI" id="CHEBI:29071"/>
        <dbReference type="EC" id="5.3.1.17"/>
    </reaction>
</comment>
<comment type="cofactor">
    <cofactor evidence="1">
        <name>Zn(2+)</name>
        <dbReference type="ChEBI" id="CHEBI:29105"/>
    </cofactor>
    <text evidence="1">Binds 1 zinc ion per subunit.</text>
</comment>
<comment type="pathway">
    <text evidence="1">Glycan metabolism; pectin degradation; 2-dehydro-3-deoxy-D-gluconate from pectin: step 4/5.</text>
</comment>
<comment type="similarity">
    <text evidence="1">Belongs to the KduI family.</text>
</comment>
<sequence>MSLYCKTHYATHPDALKGASNDTLRELYLLDGLFVADAVTLKYTHYERFVLGGAAPVGKTLELPKQTEPASAAGHPFLERRELGVINVGAGTGTVTVDGTAYTLGPKDGLYVAMGSTEVSFASADAANPAQFYLASTPAHARFETKQLSIKDAVALERGALETSNERTIYQYIVPATCQSSQLLLGLTVLKPGSVWNTMPPHLHDRRSEVYFYFDLGANDRVYHFMGEPDAQRHIVMQNNEAVVSPPWSIHMGAGTSNYAFIWAMGGENLDYTDMHVLDICQLK</sequence>
<feature type="chain" id="PRO_1000045094" description="4-deoxy-L-threo-5-hexosulose-uronate ketol-isomerase">
    <location>
        <begin position="1"/>
        <end position="284"/>
    </location>
</feature>
<feature type="binding site" evidence="1">
    <location>
        <position position="202"/>
    </location>
    <ligand>
        <name>Zn(2+)</name>
        <dbReference type="ChEBI" id="CHEBI:29105"/>
    </ligand>
</feature>
<feature type="binding site" evidence="1">
    <location>
        <position position="204"/>
    </location>
    <ligand>
        <name>Zn(2+)</name>
        <dbReference type="ChEBI" id="CHEBI:29105"/>
    </ligand>
</feature>
<feature type="binding site" evidence="1">
    <location>
        <position position="209"/>
    </location>
    <ligand>
        <name>Zn(2+)</name>
        <dbReference type="ChEBI" id="CHEBI:29105"/>
    </ligand>
</feature>
<feature type="binding site" evidence="1">
    <location>
        <position position="251"/>
    </location>
    <ligand>
        <name>Zn(2+)</name>
        <dbReference type="ChEBI" id="CHEBI:29105"/>
    </ligand>
</feature>
<name>KDUI_XANC8</name>
<proteinExistence type="inferred from homology"/>
<reference key="1">
    <citation type="journal article" date="2005" name="Genome Res.">
        <title>Comparative and functional genomic analyses of the pathogenicity of phytopathogen Xanthomonas campestris pv. campestris.</title>
        <authorList>
            <person name="Qian W."/>
            <person name="Jia Y."/>
            <person name="Ren S.-X."/>
            <person name="He Y.-Q."/>
            <person name="Feng J.-X."/>
            <person name="Lu L.-F."/>
            <person name="Sun Q."/>
            <person name="Ying G."/>
            <person name="Tang D.-J."/>
            <person name="Tang H."/>
            <person name="Wu W."/>
            <person name="Hao P."/>
            <person name="Wang L."/>
            <person name="Jiang B.-L."/>
            <person name="Zeng S."/>
            <person name="Gu W.-Y."/>
            <person name="Lu G."/>
            <person name="Rong L."/>
            <person name="Tian Y."/>
            <person name="Yao Z."/>
            <person name="Fu G."/>
            <person name="Chen B."/>
            <person name="Fang R."/>
            <person name="Qiang B."/>
            <person name="Chen Z."/>
            <person name="Zhao G.-P."/>
            <person name="Tang J.-L."/>
            <person name="He C."/>
        </authorList>
    </citation>
    <scope>NUCLEOTIDE SEQUENCE [LARGE SCALE GENOMIC DNA]</scope>
    <source>
        <strain>8004</strain>
    </source>
</reference>
<organism>
    <name type="scientific">Xanthomonas campestris pv. campestris (strain 8004)</name>
    <dbReference type="NCBI Taxonomy" id="314565"/>
    <lineage>
        <taxon>Bacteria</taxon>
        <taxon>Pseudomonadati</taxon>
        <taxon>Pseudomonadota</taxon>
        <taxon>Gammaproteobacteria</taxon>
        <taxon>Lysobacterales</taxon>
        <taxon>Lysobacteraceae</taxon>
        <taxon>Xanthomonas</taxon>
    </lineage>
</organism>
<dbReference type="EC" id="5.3.1.17" evidence="1"/>
<dbReference type="EMBL" id="CP000050">
    <property type="protein sequence ID" value="AAY47247.1"/>
    <property type="molecule type" value="Genomic_DNA"/>
</dbReference>
<dbReference type="RefSeq" id="WP_011035408.1">
    <property type="nucleotide sequence ID" value="NZ_CP155948.1"/>
</dbReference>
<dbReference type="SMR" id="Q4V0C6"/>
<dbReference type="GeneID" id="58011474"/>
<dbReference type="KEGG" id="xcb:XC_0160"/>
<dbReference type="HOGENOM" id="CLU_062609_0_0_6"/>
<dbReference type="UniPathway" id="UPA00545">
    <property type="reaction ID" value="UER00826"/>
</dbReference>
<dbReference type="Proteomes" id="UP000000420">
    <property type="component" value="Chromosome"/>
</dbReference>
<dbReference type="GO" id="GO:0008697">
    <property type="term" value="F:4-deoxy-L-threo-5-hexosulose-uronate ketol-isomerase activity"/>
    <property type="evidence" value="ECO:0007669"/>
    <property type="project" value="UniProtKB-UniRule"/>
</dbReference>
<dbReference type="GO" id="GO:0008270">
    <property type="term" value="F:zinc ion binding"/>
    <property type="evidence" value="ECO:0007669"/>
    <property type="project" value="UniProtKB-UniRule"/>
</dbReference>
<dbReference type="GO" id="GO:0019698">
    <property type="term" value="P:D-galacturonate catabolic process"/>
    <property type="evidence" value="ECO:0007669"/>
    <property type="project" value="TreeGrafter"/>
</dbReference>
<dbReference type="GO" id="GO:0042840">
    <property type="term" value="P:D-glucuronate catabolic process"/>
    <property type="evidence" value="ECO:0007669"/>
    <property type="project" value="TreeGrafter"/>
</dbReference>
<dbReference type="GO" id="GO:0045490">
    <property type="term" value="P:pectin catabolic process"/>
    <property type="evidence" value="ECO:0007669"/>
    <property type="project" value="UniProtKB-UniRule"/>
</dbReference>
<dbReference type="CDD" id="cd20491">
    <property type="entry name" value="cupin_KduI_C"/>
    <property type="match status" value="1"/>
</dbReference>
<dbReference type="CDD" id="cd20294">
    <property type="entry name" value="cupin_KduI_N"/>
    <property type="match status" value="1"/>
</dbReference>
<dbReference type="Gene3D" id="2.60.120.10">
    <property type="entry name" value="Jelly Rolls"/>
    <property type="match status" value="1"/>
</dbReference>
<dbReference type="Gene3D" id="2.60.120.520">
    <property type="entry name" value="pectin degrading enzyme 5-keto 4- deoxyuronate isomerase, domain 1"/>
    <property type="match status" value="1"/>
</dbReference>
<dbReference type="HAMAP" id="MF_00687">
    <property type="entry name" value="KduI"/>
    <property type="match status" value="1"/>
</dbReference>
<dbReference type="InterPro" id="IPR007045">
    <property type="entry name" value="KduI"/>
</dbReference>
<dbReference type="InterPro" id="IPR021120">
    <property type="entry name" value="KduI/IolB_isomerase"/>
</dbReference>
<dbReference type="InterPro" id="IPR027449">
    <property type="entry name" value="KduI_N"/>
</dbReference>
<dbReference type="InterPro" id="IPR014710">
    <property type="entry name" value="RmlC-like_jellyroll"/>
</dbReference>
<dbReference type="InterPro" id="IPR011051">
    <property type="entry name" value="RmlC_Cupin_sf"/>
</dbReference>
<dbReference type="NCBIfam" id="NF002091">
    <property type="entry name" value="PRK00924.1"/>
    <property type="match status" value="1"/>
</dbReference>
<dbReference type="PANTHER" id="PTHR38461">
    <property type="entry name" value="4-DEOXY-L-THREO-5-HEXOSULOSE-URONATE KETOL-ISOMERASE"/>
    <property type="match status" value="1"/>
</dbReference>
<dbReference type="PANTHER" id="PTHR38461:SF1">
    <property type="entry name" value="4-DEOXY-L-THREO-5-HEXOSULOSE-URONATE KETOL-ISOMERASE"/>
    <property type="match status" value="1"/>
</dbReference>
<dbReference type="Pfam" id="PF04962">
    <property type="entry name" value="KduI"/>
    <property type="match status" value="1"/>
</dbReference>
<dbReference type="PIRSF" id="PIRSF006625">
    <property type="entry name" value="KduI"/>
    <property type="match status" value="1"/>
</dbReference>
<dbReference type="SUPFAM" id="SSF51182">
    <property type="entry name" value="RmlC-like cupins"/>
    <property type="match status" value="1"/>
</dbReference>
<evidence type="ECO:0000255" key="1">
    <source>
        <dbReference type="HAMAP-Rule" id="MF_00687"/>
    </source>
</evidence>
<keyword id="KW-0413">Isomerase</keyword>
<keyword id="KW-0479">Metal-binding</keyword>
<keyword id="KW-0862">Zinc</keyword>
<protein>
    <recommendedName>
        <fullName evidence="1">4-deoxy-L-threo-5-hexosulose-uronate ketol-isomerase</fullName>
        <ecNumber evidence="1">5.3.1.17</ecNumber>
    </recommendedName>
    <alternativeName>
        <fullName evidence="1">5-keto-4-deoxyuronate isomerase</fullName>
    </alternativeName>
    <alternativeName>
        <fullName evidence="1">DKI isomerase</fullName>
    </alternativeName>
</protein>